<sequence length="330" mass="36888">MAFLEDGNHTTVTEFFLLGLTDDPVLRDILFIIILCIYLVTVSGNLSTILLIRVSSQLHHPMYFILSHLASVDIGISSSVTPNMLATFLVKQNTISYIGCSIQFTSAAFFGTVECFLLATMAYDRFVAICNPLLYSTKMSTEACIQLVVGSYIQGFLNASFFTLSFFSLFFCGPNRINDFYCDFAPLLELSCSDVTVAVVITSISAGFITLTTVFVIAISYSCIFITIMKMHSTESRCKAFSTCTSHLTAVILFYGTAIFIYVMPKSSYSTDQNKVLSIFYTVVIPMLNPLIYSLRNNEIKEALKRHLGKKVFSYGNLFCKTHYNHNYPV</sequence>
<proteinExistence type="inferred from homology"/>
<gene>
    <name evidence="4" type="primary">Or5p73</name>
    <name evidence="4" type="synonym">Mor204-36</name>
    <name evidence="4" type="synonym">Olfr498</name>
</gene>
<accession>Q8VEW2</accession>
<accession>A0A0R4J0X9</accession>
<dbReference type="EMBL" id="AY073786">
    <property type="protein sequence ID" value="AAL61449.1"/>
    <property type="molecule type" value="Genomic_DNA"/>
</dbReference>
<dbReference type="EMBL" id="AY317606">
    <property type="protein sequence ID" value="AAP71000.1"/>
    <property type="molecule type" value="Genomic_DNA"/>
</dbReference>
<dbReference type="CCDS" id="CCDS21716.1"/>
<dbReference type="RefSeq" id="NP_666419.2">
    <property type="nucleotide sequence ID" value="NM_146307.2"/>
</dbReference>
<dbReference type="SMR" id="Q8VEW2"/>
<dbReference type="FunCoup" id="Q8VEW2">
    <property type="interactions" value="1128"/>
</dbReference>
<dbReference type="STRING" id="10090.ENSMUSP00000150971"/>
<dbReference type="GlyCosmos" id="Q8VEW2">
    <property type="glycosylation" value="1 site, No reported glycans"/>
</dbReference>
<dbReference type="GlyGen" id="Q8VEW2">
    <property type="glycosylation" value="1 site"/>
</dbReference>
<dbReference type="iPTMnet" id="Q8VEW2"/>
<dbReference type="PhosphoSitePlus" id="Q8VEW2"/>
<dbReference type="PaxDb" id="10090-ENSMUSP00000074343"/>
<dbReference type="ProteomicsDB" id="293505"/>
<dbReference type="ProteomicsDB" id="334622"/>
<dbReference type="Ensembl" id="ENSMUST00000217616.3">
    <property type="protein sequence ID" value="ENSMUSP00000150971.2"/>
    <property type="gene ID" value="ENSMUSG00000096679.4"/>
</dbReference>
<dbReference type="GeneID" id="258304"/>
<dbReference type="KEGG" id="mmu:258304"/>
<dbReference type="UCSC" id="uc009jcl.1">
    <property type="organism name" value="mouse"/>
</dbReference>
<dbReference type="AGR" id="MGI:3030332"/>
<dbReference type="CTD" id="258304"/>
<dbReference type="MGI" id="MGI:3030332">
    <property type="gene designation" value="Or5p73"/>
</dbReference>
<dbReference type="VEuPathDB" id="HostDB:ENSMUSG00000096679"/>
<dbReference type="eggNOG" id="ENOG502SKA1">
    <property type="taxonomic scope" value="Eukaryota"/>
</dbReference>
<dbReference type="GeneTree" id="ENSGT01130000278279"/>
<dbReference type="InParanoid" id="Q8VEW2"/>
<dbReference type="OMA" id="GPNRIND"/>
<dbReference type="OrthoDB" id="53564at9989"/>
<dbReference type="PhylomeDB" id="Q8VEW2"/>
<dbReference type="TreeFam" id="TF338848"/>
<dbReference type="BioGRID-ORCS" id="258304">
    <property type="hits" value="2 hits in 66 CRISPR screens"/>
</dbReference>
<dbReference type="PRO" id="PR:Q8VEW2"/>
<dbReference type="Proteomes" id="UP000000589">
    <property type="component" value="Chromosome 7"/>
</dbReference>
<dbReference type="RNAct" id="Q8VEW2">
    <property type="molecule type" value="protein"/>
</dbReference>
<dbReference type="GO" id="GO:0016020">
    <property type="term" value="C:membrane"/>
    <property type="evidence" value="ECO:0000247"/>
    <property type="project" value="MGI"/>
</dbReference>
<dbReference type="GO" id="GO:0005886">
    <property type="term" value="C:plasma membrane"/>
    <property type="evidence" value="ECO:0007669"/>
    <property type="project" value="UniProtKB-SubCell"/>
</dbReference>
<dbReference type="GO" id="GO:0004930">
    <property type="term" value="F:G protein-coupled receptor activity"/>
    <property type="evidence" value="ECO:0007669"/>
    <property type="project" value="UniProtKB-KW"/>
</dbReference>
<dbReference type="GO" id="GO:0004984">
    <property type="term" value="F:olfactory receptor activity"/>
    <property type="evidence" value="ECO:0000247"/>
    <property type="project" value="MGI"/>
</dbReference>
<dbReference type="GO" id="GO:0007186">
    <property type="term" value="P:G protein-coupled receptor signaling pathway"/>
    <property type="evidence" value="ECO:0000247"/>
    <property type="project" value="MGI"/>
</dbReference>
<dbReference type="GO" id="GO:0007608">
    <property type="term" value="P:sensory perception of smell"/>
    <property type="evidence" value="ECO:0000247"/>
    <property type="project" value="MGI"/>
</dbReference>
<dbReference type="FunFam" id="1.20.1070.10:FF:000004">
    <property type="entry name" value="Olfactory receptor"/>
    <property type="match status" value="1"/>
</dbReference>
<dbReference type="Gene3D" id="1.20.1070.10">
    <property type="entry name" value="Rhodopsin 7-helix transmembrane proteins"/>
    <property type="match status" value="1"/>
</dbReference>
<dbReference type="InterPro" id="IPR000276">
    <property type="entry name" value="GPCR_Rhodpsn"/>
</dbReference>
<dbReference type="InterPro" id="IPR017452">
    <property type="entry name" value="GPCR_Rhodpsn_7TM"/>
</dbReference>
<dbReference type="InterPro" id="IPR000725">
    <property type="entry name" value="Olfact_rcpt"/>
</dbReference>
<dbReference type="PANTHER" id="PTHR48018">
    <property type="entry name" value="OLFACTORY RECEPTOR"/>
    <property type="match status" value="1"/>
</dbReference>
<dbReference type="Pfam" id="PF13853">
    <property type="entry name" value="7tm_4"/>
    <property type="match status" value="1"/>
</dbReference>
<dbReference type="PRINTS" id="PR00237">
    <property type="entry name" value="GPCRRHODOPSN"/>
</dbReference>
<dbReference type="PRINTS" id="PR00245">
    <property type="entry name" value="OLFACTORYR"/>
</dbReference>
<dbReference type="SUPFAM" id="SSF81321">
    <property type="entry name" value="Family A G protein-coupled receptor-like"/>
    <property type="match status" value="1"/>
</dbReference>
<dbReference type="PROSITE" id="PS00237">
    <property type="entry name" value="G_PROTEIN_RECEP_F1_1"/>
    <property type="match status" value="1"/>
</dbReference>
<dbReference type="PROSITE" id="PS50262">
    <property type="entry name" value="G_PROTEIN_RECEP_F1_2"/>
    <property type="match status" value="1"/>
</dbReference>
<feature type="chain" id="PRO_0000150852" description="Olfactory receptor 5P73">
    <location>
        <begin position="1"/>
        <end position="330"/>
    </location>
</feature>
<feature type="topological domain" description="Extracellular" evidence="1">
    <location>
        <begin position="1"/>
        <end position="28"/>
    </location>
</feature>
<feature type="transmembrane region" description="Helical; Name=1" evidence="1">
    <location>
        <begin position="29"/>
        <end position="49"/>
    </location>
</feature>
<feature type="topological domain" description="Cytoplasmic" evidence="1">
    <location>
        <begin position="50"/>
        <end position="57"/>
    </location>
</feature>
<feature type="transmembrane region" description="Helical; Name=2" evidence="1">
    <location>
        <begin position="58"/>
        <end position="78"/>
    </location>
</feature>
<feature type="topological domain" description="Extracellular" evidence="1">
    <location>
        <begin position="79"/>
        <end position="102"/>
    </location>
</feature>
<feature type="transmembrane region" description="Helical; Name=3" evidence="1">
    <location>
        <begin position="103"/>
        <end position="123"/>
    </location>
</feature>
<feature type="topological domain" description="Cytoplasmic" evidence="1">
    <location>
        <begin position="124"/>
        <end position="136"/>
    </location>
</feature>
<feature type="transmembrane region" description="Helical; Name=4" evidence="1">
    <location>
        <begin position="137"/>
        <end position="157"/>
    </location>
</feature>
<feature type="topological domain" description="Extracellular" evidence="1">
    <location>
        <begin position="158"/>
        <end position="199"/>
    </location>
</feature>
<feature type="transmembrane region" description="Helical; Name=5" evidence="1">
    <location>
        <begin position="200"/>
        <end position="220"/>
    </location>
</feature>
<feature type="topological domain" description="Cytoplasmic" evidence="1">
    <location>
        <begin position="221"/>
        <end position="240"/>
    </location>
</feature>
<feature type="transmembrane region" description="Helical; Name=6" evidence="1">
    <location>
        <begin position="241"/>
        <end position="261"/>
    </location>
</feature>
<feature type="topological domain" description="Extracellular" evidence="1">
    <location>
        <begin position="262"/>
        <end position="274"/>
    </location>
</feature>
<feature type="transmembrane region" description="Helical; Name=7" evidence="1">
    <location>
        <begin position="275"/>
        <end position="295"/>
    </location>
</feature>
<feature type="topological domain" description="Cytoplasmic" evidence="1">
    <location>
        <begin position="296"/>
        <end position="330"/>
    </location>
</feature>
<feature type="glycosylation site" description="N-linked (GlcNAc...) asparagine" evidence="1">
    <location>
        <position position="8"/>
    </location>
</feature>
<feature type="disulfide bond" evidence="2">
    <location>
        <begin position="100"/>
        <end position="192"/>
    </location>
</feature>
<feature type="sequence conflict" description="In Ref. 2; AAL61449." evidence="3" ref="2">
    <original>F</original>
    <variation>I</variation>
    <location>
        <position position="16"/>
    </location>
</feature>
<comment type="function">
    <text>Potential odorant receptor.</text>
</comment>
<comment type="subcellular location">
    <subcellularLocation>
        <location evidence="3">Cell membrane</location>
        <topology evidence="1">Multi-pass membrane protein</topology>
    </subcellularLocation>
</comment>
<comment type="similarity">
    <text evidence="2">Belongs to the G-protein coupled receptor 1 family.</text>
</comment>
<evidence type="ECO:0000255" key="1"/>
<evidence type="ECO:0000255" key="2">
    <source>
        <dbReference type="PROSITE-ProRule" id="PRU00521"/>
    </source>
</evidence>
<evidence type="ECO:0000305" key="3"/>
<evidence type="ECO:0000312" key="4">
    <source>
        <dbReference type="MGI" id="MGI:3030332"/>
    </source>
</evidence>
<evidence type="ECO:0000312" key="5">
    <source>
        <dbReference type="Proteomes" id="UP000000589"/>
    </source>
</evidence>
<name>O5P73_MOUSE</name>
<reference key="1">
    <citation type="journal article" date="2002" name="Nat. Neurosci.">
        <title>The olfactory receptor gene superfamily of the mouse.</title>
        <authorList>
            <person name="Zhang X."/>
            <person name="Firestein S."/>
        </authorList>
    </citation>
    <scope>NUCLEOTIDE SEQUENCE [GENOMIC DNA]</scope>
</reference>
<reference key="2">
    <citation type="journal article" date="2002" name="Hum. Mol. Genet.">
        <title>Different evolutionary processes shaped the mouse and human olfactory receptor gene families.</title>
        <authorList>
            <person name="Young J.M."/>
            <person name="Friedman C."/>
            <person name="Williams E.M."/>
            <person name="Ross J.A."/>
            <person name="Tonnes-Priddy L."/>
            <person name="Trask B.J."/>
        </authorList>
    </citation>
    <scope>NUCLEOTIDE SEQUENCE [GENOMIC DNA]</scope>
</reference>
<reference key="3">
    <citation type="journal article" date="2002" name="Hum. Mol. Genet.">
        <authorList>
            <person name="Young J.M."/>
            <person name="Friedman C."/>
            <person name="Williams E.M."/>
            <person name="Ross J.A."/>
            <person name="Tonnes-Priddy L."/>
            <person name="Trask B.J."/>
        </authorList>
    </citation>
    <scope>ERRATUM OF PUBMED:11875048</scope>
</reference>
<reference evidence="5" key="4">
    <citation type="journal article" date="2009" name="PLoS Biol.">
        <title>Lineage-specific biology revealed by a finished genome assembly of the mouse.</title>
        <authorList>
            <person name="Church D.M."/>
            <person name="Goodstadt L."/>
            <person name="Hillier L.W."/>
            <person name="Zody M.C."/>
            <person name="Goldstein S."/>
            <person name="She X."/>
            <person name="Bult C.J."/>
            <person name="Agarwala R."/>
            <person name="Cherry J.L."/>
            <person name="DiCuccio M."/>
            <person name="Hlavina W."/>
            <person name="Kapustin Y."/>
            <person name="Meric P."/>
            <person name="Maglott D."/>
            <person name="Birtle Z."/>
            <person name="Marques A.C."/>
            <person name="Graves T."/>
            <person name="Zhou S."/>
            <person name="Teague B."/>
            <person name="Potamousis K."/>
            <person name="Churas C."/>
            <person name="Place M."/>
            <person name="Herschleb J."/>
            <person name="Runnheim R."/>
            <person name="Forrest D."/>
            <person name="Amos-Landgraf J."/>
            <person name="Schwartz D.C."/>
            <person name="Cheng Z."/>
            <person name="Lindblad-Toh K."/>
            <person name="Eichler E.E."/>
            <person name="Ponting C.P."/>
        </authorList>
    </citation>
    <scope>NUCLEOTIDE SEQUENCE [LARGE SCALE GENOMIC DNA]</scope>
    <source>
        <strain evidence="5">C57BL/6J</strain>
    </source>
</reference>
<keyword id="KW-1003">Cell membrane</keyword>
<keyword id="KW-1015">Disulfide bond</keyword>
<keyword id="KW-0297">G-protein coupled receptor</keyword>
<keyword id="KW-0325">Glycoprotein</keyword>
<keyword id="KW-0472">Membrane</keyword>
<keyword id="KW-0552">Olfaction</keyword>
<keyword id="KW-0675">Receptor</keyword>
<keyword id="KW-1185">Reference proteome</keyword>
<keyword id="KW-0716">Sensory transduction</keyword>
<keyword id="KW-0807">Transducer</keyword>
<keyword id="KW-0812">Transmembrane</keyword>
<keyword id="KW-1133">Transmembrane helix</keyword>
<organism>
    <name type="scientific">Mus musculus</name>
    <name type="common">Mouse</name>
    <dbReference type="NCBI Taxonomy" id="10090"/>
    <lineage>
        <taxon>Eukaryota</taxon>
        <taxon>Metazoa</taxon>
        <taxon>Chordata</taxon>
        <taxon>Craniata</taxon>
        <taxon>Vertebrata</taxon>
        <taxon>Euteleostomi</taxon>
        <taxon>Mammalia</taxon>
        <taxon>Eutheria</taxon>
        <taxon>Euarchontoglires</taxon>
        <taxon>Glires</taxon>
        <taxon>Rodentia</taxon>
        <taxon>Myomorpha</taxon>
        <taxon>Muroidea</taxon>
        <taxon>Muridae</taxon>
        <taxon>Murinae</taxon>
        <taxon>Mus</taxon>
        <taxon>Mus</taxon>
    </lineage>
</organism>
<protein>
    <recommendedName>
        <fullName evidence="3">Olfactory receptor 5P73</fullName>
    </recommendedName>
    <alternativeName>
        <fullName>Olfactory receptor 204-36</fullName>
    </alternativeName>
    <alternativeName>
        <fullName>Olfactory receptor 498</fullName>
    </alternativeName>
</protein>